<proteinExistence type="inferred from homology"/>
<feature type="chain" id="PRO_0000151126" description="Undecaprenyl-diphosphatase 1">
    <location>
        <begin position="1"/>
        <end position="276"/>
    </location>
</feature>
<feature type="transmembrane region" description="Helical" evidence="1">
    <location>
        <begin position="1"/>
        <end position="21"/>
    </location>
</feature>
<feature type="transmembrane region" description="Helical" evidence="1">
    <location>
        <begin position="44"/>
        <end position="64"/>
    </location>
</feature>
<feature type="transmembrane region" description="Helical" evidence="1">
    <location>
        <begin position="87"/>
        <end position="107"/>
    </location>
</feature>
<feature type="transmembrane region" description="Helical" evidence="1">
    <location>
        <begin position="114"/>
        <end position="134"/>
    </location>
</feature>
<feature type="transmembrane region" description="Helical" evidence="1">
    <location>
        <begin position="150"/>
        <end position="170"/>
    </location>
</feature>
<feature type="transmembrane region" description="Helical" evidence="1">
    <location>
        <begin position="190"/>
        <end position="210"/>
    </location>
</feature>
<feature type="transmembrane region" description="Helical" evidence="1">
    <location>
        <begin position="222"/>
        <end position="242"/>
    </location>
</feature>
<feature type="transmembrane region" description="Helical" evidence="1">
    <location>
        <begin position="251"/>
        <end position="271"/>
    </location>
</feature>
<dbReference type="EC" id="3.6.1.27" evidence="1"/>
<dbReference type="EMBL" id="BX571965">
    <property type="protein sequence ID" value="CAH35383.1"/>
    <property type="molecule type" value="Genomic_DNA"/>
</dbReference>
<dbReference type="RefSeq" id="WP_004521810.1">
    <property type="nucleotide sequence ID" value="NZ_CP009538.1"/>
</dbReference>
<dbReference type="RefSeq" id="YP_108008.1">
    <property type="nucleotide sequence ID" value="NC_006350.1"/>
</dbReference>
<dbReference type="SMR" id="Q63V58"/>
<dbReference type="STRING" id="272560.BPSL1383"/>
<dbReference type="KEGG" id="bps:BPSL1383"/>
<dbReference type="PATRIC" id="fig|272560.51.peg.93"/>
<dbReference type="eggNOG" id="COG1968">
    <property type="taxonomic scope" value="Bacteria"/>
</dbReference>
<dbReference type="Proteomes" id="UP000000605">
    <property type="component" value="Chromosome 1"/>
</dbReference>
<dbReference type="GO" id="GO:0005886">
    <property type="term" value="C:plasma membrane"/>
    <property type="evidence" value="ECO:0007669"/>
    <property type="project" value="UniProtKB-SubCell"/>
</dbReference>
<dbReference type="GO" id="GO:0050380">
    <property type="term" value="F:undecaprenyl-diphosphatase activity"/>
    <property type="evidence" value="ECO:0007669"/>
    <property type="project" value="UniProtKB-UniRule"/>
</dbReference>
<dbReference type="GO" id="GO:0071555">
    <property type="term" value="P:cell wall organization"/>
    <property type="evidence" value="ECO:0007669"/>
    <property type="project" value="UniProtKB-KW"/>
</dbReference>
<dbReference type="GO" id="GO:0009252">
    <property type="term" value="P:peptidoglycan biosynthetic process"/>
    <property type="evidence" value="ECO:0007669"/>
    <property type="project" value="UniProtKB-KW"/>
</dbReference>
<dbReference type="GO" id="GO:0008360">
    <property type="term" value="P:regulation of cell shape"/>
    <property type="evidence" value="ECO:0007669"/>
    <property type="project" value="UniProtKB-KW"/>
</dbReference>
<dbReference type="GO" id="GO:0046677">
    <property type="term" value="P:response to antibiotic"/>
    <property type="evidence" value="ECO:0007669"/>
    <property type="project" value="UniProtKB-UniRule"/>
</dbReference>
<dbReference type="HAMAP" id="MF_01006">
    <property type="entry name" value="Undec_diphosphatase"/>
    <property type="match status" value="1"/>
</dbReference>
<dbReference type="InterPro" id="IPR003824">
    <property type="entry name" value="UppP"/>
</dbReference>
<dbReference type="PANTHER" id="PTHR30622">
    <property type="entry name" value="UNDECAPRENYL-DIPHOSPHATASE"/>
    <property type="match status" value="1"/>
</dbReference>
<dbReference type="PANTHER" id="PTHR30622:SF4">
    <property type="entry name" value="UNDECAPRENYL-DIPHOSPHATASE"/>
    <property type="match status" value="1"/>
</dbReference>
<dbReference type="Pfam" id="PF02673">
    <property type="entry name" value="BacA"/>
    <property type="match status" value="1"/>
</dbReference>
<keyword id="KW-0046">Antibiotic resistance</keyword>
<keyword id="KW-0997">Cell inner membrane</keyword>
<keyword id="KW-1003">Cell membrane</keyword>
<keyword id="KW-0133">Cell shape</keyword>
<keyword id="KW-0961">Cell wall biogenesis/degradation</keyword>
<keyword id="KW-0378">Hydrolase</keyword>
<keyword id="KW-0472">Membrane</keyword>
<keyword id="KW-0573">Peptidoglycan synthesis</keyword>
<keyword id="KW-1185">Reference proteome</keyword>
<keyword id="KW-0812">Transmembrane</keyword>
<keyword id="KW-1133">Transmembrane helix</keyword>
<organism>
    <name type="scientific">Burkholderia pseudomallei (strain K96243)</name>
    <dbReference type="NCBI Taxonomy" id="272560"/>
    <lineage>
        <taxon>Bacteria</taxon>
        <taxon>Pseudomonadati</taxon>
        <taxon>Pseudomonadota</taxon>
        <taxon>Betaproteobacteria</taxon>
        <taxon>Burkholderiales</taxon>
        <taxon>Burkholderiaceae</taxon>
        <taxon>Burkholderia</taxon>
        <taxon>pseudomallei group</taxon>
    </lineage>
</organism>
<accession>Q63V58</accession>
<name>UPPP1_BURPS</name>
<reference key="1">
    <citation type="journal article" date="2004" name="Proc. Natl. Acad. Sci. U.S.A.">
        <title>Genomic plasticity of the causative agent of melioidosis, Burkholderia pseudomallei.</title>
        <authorList>
            <person name="Holden M.T.G."/>
            <person name="Titball R.W."/>
            <person name="Peacock S.J."/>
            <person name="Cerdeno-Tarraga A.-M."/>
            <person name="Atkins T."/>
            <person name="Crossman L.C."/>
            <person name="Pitt T."/>
            <person name="Churcher C."/>
            <person name="Mungall K.L."/>
            <person name="Bentley S.D."/>
            <person name="Sebaihia M."/>
            <person name="Thomson N.R."/>
            <person name="Bason N."/>
            <person name="Beacham I.R."/>
            <person name="Brooks K."/>
            <person name="Brown K.A."/>
            <person name="Brown N.F."/>
            <person name="Challis G.L."/>
            <person name="Cherevach I."/>
            <person name="Chillingworth T."/>
            <person name="Cronin A."/>
            <person name="Crossett B."/>
            <person name="Davis P."/>
            <person name="DeShazer D."/>
            <person name="Feltwell T."/>
            <person name="Fraser A."/>
            <person name="Hance Z."/>
            <person name="Hauser H."/>
            <person name="Holroyd S."/>
            <person name="Jagels K."/>
            <person name="Keith K.E."/>
            <person name="Maddison M."/>
            <person name="Moule S."/>
            <person name="Price C."/>
            <person name="Quail M.A."/>
            <person name="Rabbinowitsch E."/>
            <person name="Rutherford K."/>
            <person name="Sanders M."/>
            <person name="Simmonds M."/>
            <person name="Songsivilai S."/>
            <person name="Stevens K."/>
            <person name="Tumapa S."/>
            <person name="Vesaratchavest M."/>
            <person name="Whitehead S."/>
            <person name="Yeats C."/>
            <person name="Barrell B.G."/>
            <person name="Oyston P.C.F."/>
            <person name="Parkhill J."/>
        </authorList>
    </citation>
    <scope>NUCLEOTIDE SEQUENCE [LARGE SCALE GENOMIC DNA]</scope>
    <source>
        <strain>K96243</strain>
    </source>
</reference>
<protein>
    <recommendedName>
        <fullName evidence="1">Undecaprenyl-diphosphatase 1</fullName>
        <ecNumber evidence="1">3.6.1.27</ecNumber>
    </recommendedName>
    <alternativeName>
        <fullName evidence="1">Bacitracin resistance protein 1</fullName>
    </alternativeName>
    <alternativeName>
        <fullName evidence="1">Undecaprenyl pyrophosphate phosphatase 1</fullName>
    </alternativeName>
</protein>
<sequence length="276" mass="30247">MSLWFLVFLSVLQGVTELFPVSSLGHTLLVPALFGMHIDKHAPQLLPFLVALHLGTALALLWYFRERWIALIAGFFASLNGRKNDEGHLMWALIIGTIPTGLVGLLLEKRIERVFHDLRIVAAALIINGVLLWLGDRIQRARAHRPPEKLTFKQAFFVGLAQVGALIPGFSRSGLTMIAGNAAGLTADKAAEFSFLLGTPIIFAAGLLELPKLFHAPDQLADALLGGVLTAIAAYLSVRFLMRYFEGRGRLASFGLYCVLAGLFCLGWFMFHAQPV</sequence>
<gene>
    <name evidence="1" type="primary">uppP1</name>
    <name type="ordered locus">BPSL1383</name>
</gene>
<evidence type="ECO:0000255" key="1">
    <source>
        <dbReference type="HAMAP-Rule" id="MF_01006"/>
    </source>
</evidence>
<comment type="function">
    <text evidence="1">Catalyzes the dephosphorylation of undecaprenyl diphosphate (UPP). Confers resistance to bacitracin.</text>
</comment>
<comment type="catalytic activity">
    <reaction evidence="1">
        <text>di-trans,octa-cis-undecaprenyl diphosphate + H2O = di-trans,octa-cis-undecaprenyl phosphate + phosphate + H(+)</text>
        <dbReference type="Rhea" id="RHEA:28094"/>
        <dbReference type="ChEBI" id="CHEBI:15377"/>
        <dbReference type="ChEBI" id="CHEBI:15378"/>
        <dbReference type="ChEBI" id="CHEBI:43474"/>
        <dbReference type="ChEBI" id="CHEBI:58405"/>
        <dbReference type="ChEBI" id="CHEBI:60392"/>
        <dbReference type="EC" id="3.6.1.27"/>
    </reaction>
</comment>
<comment type="subcellular location">
    <subcellularLocation>
        <location evidence="1">Cell inner membrane</location>
        <topology evidence="1">Multi-pass membrane protein</topology>
    </subcellularLocation>
</comment>
<comment type="miscellaneous">
    <text>Bacitracin is thought to be involved in the inhibition of peptidoglycan synthesis by sequestering undecaprenyl diphosphate, thereby reducing the pool of lipid carrier available.</text>
</comment>
<comment type="similarity">
    <text evidence="1">Belongs to the UppP family.</text>
</comment>